<keyword id="KW-0012">Acyltransferase</keyword>
<keyword id="KW-0611">Plant defense</keyword>
<keyword id="KW-1185">Reference proteome</keyword>
<keyword id="KW-0808">Transferase</keyword>
<organism>
    <name type="scientific">Oryza sativa subsp. japonica</name>
    <name type="common">Rice</name>
    <dbReference type="NCBI Taxonomy" id="39947"/>
    <lineage>
        <taxon>Eukaryota</taxon>
        <taxon>Viridiplantae</taxon>
        <taxon>Streptophyta</taxon>
        <taxon>Embryophyta</taxon>
        <taxon>Tracheophyta</taxon>
        <taxon>Spermatophyta</taxon>
        <taxon>Magnoliopsida</taxon>
        <taxon>Liliopsida</taxon>
        <taxon>Poales</taxon>
        <taxon>Poaceae</taxon>
        <taxon>BOP clade</taxon>
        <taxon>Oryzoideae</taxon>
        <taxon>Oryzeae</taxon>
        <taxon>Oryzinae</taxon>
        <taxon>Oryza</taxon>
        <taxon>Oryza sativa</taxon>
    </lineage>
</organism>
<reference key="1">
    <citation type="journal article" date="2003" name="Science">
        <title>In-depth view of structure, activity, and evolution of rice chromosome 10.</title>
        <authorList>
            <person name="Yu Y."/>
            <person name="Rambo T."/>
            <person name="Currie J."/>
            <person name="Saski C."/>
            <person name="Kim H.-R."/>
            <person name="Collura K."/>
            <person name="Thompson S."/>
            <person name="Simmons J."/>
            <person name="Yang T.-J."/>
            <person name="Nah G."/>
            <person name="Patel A.J."/>
            <person name="Thurmond S."/>
            <person name="Henry D."/>
            <person name="Oates R."/>
            <person name="Palmer M."/>
            <person name="Pries G."/>
            <person name="Gibson J."/>
            <person name="Anderson H."/>
            <person name="Paradkar M."/>
            <person name="Crane L."/>
            <person name="Dale J."/>
            <person name="Carver M.B."/>
            <person name="Wood T."/>
            <person name="Frisch D."/>
            <person name="Engler F."/>
            <person name="Soderlund C."/>
            <person name="Palmer L.E."/>
            <person name="Teytelman L."/>
            <person name="Nascimento L."/>
            <person name="De la Bastide M."/>
            <person name="Spiegel L."/>
            <person name="Ware D."/>
            <person name="O'Shaughnessy A."/>
            <person name="Dike S."/>
            <person name="Dedhia N."/>
            <person name="Preston R."/>
            <person name="Huang E."/>
            <person name="Ferraro K."/>
            <person name="Kuit K."/>
            <person name="Miller B."/>
            <person name="Zutavern T."/>
            <person name="Katzenberger F."/>
            <person name="Muller S."/>
            <person name="Balija V."/>
            <person name="Martienssen R.A."/>
            <person name="Stein L."/>
            <person name="Minx P."/>
            <person name="Johnson D."/>
            <person name="Cordum H."/>
            <person name="Mardis E."/>
            <person name="Cheng Z."/>
            <person name="Jiang J."/>
            <person name="Wilson R."/>
            <person name="McCombie W.R."/>
            <person name="Wing R.A."/>
            <person name="Yuan Q."/>
            <person name="Ouyang S."/>
            <person name="Liu J."/>
            <person name="Jones K.M."/>
            <person name="Gansberger K."/>
            <person name="Moffat K."/>
            <person name="Hill J."/>
            <person name="Tsitrin T."/>
            <person name="Overton L."/>
            <person name="Bera J."/>
            <person name="Kim M."/>
            <person name="Jin S."/>
            <person name="Tallon L."/>
            <person name="Ciecko A."/>
            <person name="Pai G."/>
            <person name="Van Aken S."/>
            <person name="Utterback T."/>
            <person name="Reidmuller S."/>
            <person name="Bormann J."/>
            <person name="Feldblyum T."/>
            <person name="Hsiao J."/>
            <person name="Zismann V."/>
            <person name="Blunt S."/>
            <person name="de Vazeille A.R."/>
            <person name="Shaffer T."/>
            <person name="Koo H."/>
            <person name="Suh B."/>
            <person name="Yang Q."/>
            <person name="Haas B."/>
            <person name="Peterson J."/>
            <person name="Pertea M."/>
            <person name="Volfovsky N."/>
            <person name="Wortman J."/>
            <person name="White O."/>
            <person name="Salzberg S.L."/>
            <person name="Fraser C.M."/>
            <person name="Buell C.R."/>
            <person name="Messing J."/>
            <person name="Song R."/>
            <person name="Fuks G."/>
            <person name="Llaca V."/>
            <person name="Kovchak S."/>
            <person name="Young S."/>
            <person name="Bowers J.E."/>
            <person name="Paterson A.H."/>
            <person name="Johns M.A."/>
            <person name="Mao L."/>
            <person name="Pan H."/>
            <person name="Dean R.A."/>
        </authorList>
    </citation>
    <scope>NUCLEOTIDE SEQUENCE [LARGE SCALE GENOMIC DNA]</scope>
    <source>
        <strain>cv. Nipponbare</strain>
    </source>
</reference>
<reference key="2">
    <citation type="journal article" date="2005" name="Nature">
        <title>The map-based sequence of the rice genome.</title>
        <authorList>
            <consortium name="International rice genome sequencing project (IRGSP)"/>
        </authorList>
    </citation>
    <scope>NUCLEOTIDE SEQUENCE [LARGE SCALE GENOMIC DNA]</scope>
    <source>
        <strain>cv. Nipponbare</strain>
    </source>
</reference>
<reference key="3">
    <citation type="journal article" date="2008" name="Nucleic Acids Res.">
        <title>The rice annotation project database (RAP-DB): 2008 update.</title>
        <authorList>
            <consortium name="The rice annotation project (RAP)"/>
        </authorList>
    </citation>
    <scope>GENOME REANNOTATION</scope>
    <source>
        <strain>cv. Nipponbare</strain>
    </source>
</reference>
<reference key="4">
    <citation type="journal article" date="2013" name="Rice">
        <title>Improvement of the Oryza sativa Nipponbare reference genome using next generation sequence and optical map data.</title>
        <authorList>
            <person name="Kawahara Y."/>
            <person name="de la Bastide M."/>
            <person name="Hamilton J.P."/>
            <person name="Kanamori H."/>
            <person name="McCombie W.R."/>
            <person name="Ouyang S."/>
            <person name="Schwartz D.C."/>
            <person name="Tanaka T."/>
            <person name="Wu J."/>
            <person name="Zhou S."/>
            <person name="Childs K.L."/>
            <person name="Davidson R.M."/>
            <person name="Lin H."/>
            <person name="Quesada-Ocampo L."/>
            <person name="Vaillancourt B."/>
            <person name="Sakai H."/>
            <person name="Lee S.S."/>
            <person name="Kim J."/>
            <person name="Numa H."/>
            <person name="Itoh T."/>
            <person name="Buell C.R."/>
            <person name="Matsumoto T."/>
        </authorList>
    </citation>
    <scope>GENOME REANNOTATION</scope>
    <source>
        <strain>cv. Nipponbare</strain>
    </source>
</reference>
<reference key="5">
    <citation type="journal article" date="2007" name="Plant Mol. Biol.">
        <title>Isolation and molecular characterization of a Spotted leaf 18 mutant by modified activation-tagging in rice.</title>
        <authorList>
            <person name="Mori M."/>
            <person name="Tomita C."/>
            <person name="Sugimoto K."/>
            <person name="Hasegawa M."/>
            <person name="Hayashi N."/>
            <person name="Dubouzet J.G."/>
            <person name="Ochiai H."/>
            <person name="Sekimoto H."/>
            <person name="Hirochika H."/>
            <person name="Kikuchi S."/>
        </authorList>
    </citation>
    <scope>FUNCTION</scope>
    <scope>TISSUE SPECIFICITY</scope>
</reference>
<accession>Q7G4G7</accession>
<sequence>MVVTFTSRRSEPVLLRPARPTPRETKQLSDLDDQRTLRYYETVVGFFRRCDGGAAGAVGAPADPAKAIRAALAEALVYYYPVAGRLREVADGGGAGNRLVVDCTAEGVVFVEADADVRLEDFGQPLLPPYPCVGELLCDAGDTRAVVGKPLLLMQVTQLKCGGFVLGFHICHNIADGFGMAQLIMAIADLARGEPAPTILPVWRRDLLTAARLGSGAVARTPFASAAAASASASSPALQNGARRAAAAADAMLSTPPDRMVVEYFLFGPREVSYLRGQLPAHLADSTTVFELLTAVMWRCRTAALGYGPDLRVRLMITMNARGRWNAHTPLPRGFYGNAHVSPVAEAAAGDLLGRPLADTVELVRRTKRGMTRERMSAMVETVAQLREWPPSSMDRVYEVSDIKWTTVNLLKFGWAEFAGGGIPLAGDLTSKLGSDHTRCKNSAGEVSTVVSMLLPRVAMARFKKEMAVLLNKDDKKSLTIMSSL</sequence>
<comment type="function">
    <text evidence="2">Involved in defense against pathogens. May contribute to disease resistance by potentiating disease resistance signaling, or producing phytoalexin-like secondary products.</text>
</comment>
<comment type="tissue specificity">
    <text evidence="2">Highly expressed in young panicles. Expressed in leaf sheaths and panicles.</text>
</comment>
<comment type="miscellaneous">
    <text evidence="2">The gain-of-function mutants Spl18 (T-DNA tagging) show a lesion mimic phenotype, express constitutively PBZ1, accumulate the phytoalexins momilactone A and sakuranetin, and display enhanced resistance to rice blast fungus (M.oryzae). Plants over-expressing SPL18 show a lesion mimic phenotype and display enhanced resistance to bacterial blight (X.oryzae pv. oryzae).</text>
</comment>
<comment type="similarity">
    <text evidence="4">Belongs to the plant acyltransferase family.</text>
</comment>
<feature type="chain" id="PRO_0000437774" description="Acyl transferase 1">
    <location>
        <begin position="1"/>
        <end position="485"/>
    </location>
</feature>
<feature type="active site" description="Proton acceptor" evidence="1">
    <location>
        <position position="172"/>
    </location>
</feature>
<name>AT1_ORYSJ</name>
<protein>
    <recommendedName>
        <fullName evidence="4">Acyl transferase 1</fullName>
        <shortName evidence="3">OsAT1</shortName>
        <ecNumber evidence="4">2.3.1.-</ecNumber>
    </recommendedName>
    <alternativeName>
        <fullName evidence="3">Protein SPOTTED LEAF 18</fullName>
    </alternativeName>
</protein>
<gene>
    <name evidence="3" type="primary">AT1</name>
    <name evidence="3" type="synonym">SPL18</name>
    <name evidence="7" type="ordered locus">Os10g0195600</name>
    <name evidence="6" type="ordered locus">LOC_Os10g11980</name>
    <name evidence="5" type="ORF">OSJNBa0034E15.15</name>
</gene>
<evidence type="ECO:0000250" key="1">
    <source>
        <dbReference type="UniProtKB" id="Q8W1W9"/>
    </source>
</evidence>
<evidence type="ECO:0000269" key="2">
    <source>
    </source>
</evidence>
<evidence type="ECO:0000303" key="3">
    <source>
    </source>
</evidence>
<evidence type="ECO:0000305" key="4"/>
<evidence type="ECO:0000312" key="5">
    <source>
        <dbReference type="EMBL" id="AAN05389.1"/>
    </source>
</evidence>
<evidence type="ECO:0000312" key="6">
    <source>
        <dbReference type="EMBL" id="AAP52614.1"/>
    </source>
</evidence>
<evidence type="ECO:0000312" key="7">
    <source>
        <dbReference type="EMBL" id="BAF26202.1"/>
    </source>
</evidence>
<proteinExistence type="evidence at transcript level"/>
<dbReference type="EC" id="2.3.1.-" evidence="4"/>
<dbReference type="EMBL" id="AC093612">
    <property type="protein sequence ID" value="AAX95735.1"/>
    <property type="molecule type" value="Genomic_DNA"/>
</dbReference>
<dbReference type="EMBL" id="AC105377">
    <property type="protein sequence ID" value="AAN05389.1"/>
    <property type="molecule type" value="Genomic_DNA"/>
</dbReference>
<dbReference type="EMBL" id="DP000086">
    <property type="protein sequence ID" value="AAP52614.1"/>
    <property type="molecule type" value="Genomic_DNA"/>
</dbReference>
<dbReference type="EMBL" id="AP008216">
    <property type="protein sequence ID" value="BAF26202.1"/>
    <property type="molecule type" value="Genomic_DNA"/>
</dbReference>
<dbReference type="EMBL" id="AP014966">
    <property type="protein sequence ID" value="BAT10210.1"/>
    <property type="molecule type" value="Genomic_DNA"/>
</dbReference>
<dbReference type="RefSeq" id="XP_015612859.1">
    <property type="nucleotide sequence ID" value="XM_015757373.1"/>
</dbReference>
<dbReference type="RefSeq" id="XP_015612860.1">
    <property type="nucleotide sequence ID" value="XM_015757374.1"/>
</dbReference>
<dbReference type="SMR" id="Q7G4G7"/>
<dbReference type="FunCoup" id="Q7G4G7">
    <property type="interactions" value="1"/>
</dbReference>
<dbReference type="STRING" id="39947.Q7G4G7"/>
<dbReference type="PaxDb" id="39947-Q7G4G7"/>
<dbReference type="EnsemblPlants" id="Os10t0195600-01">
    <property type="protein sequence ID" value="Os10t0195600-01"/>
    <property type="gene ID" value="Os10g0195600"/>
</dbReference>
<dbReference type="Gramene" id="Os10t0195600-01">
    <property type="protein sequence ID" value="Os10t0195600-01"/>
    <property type="gene ID" value="Os10g0195600"/>
</dbReference>
<dbReference type="KEGG" id="dosa:Os10g0195600"/>
<dbReference type="eggNOG" id="ENOG502QUSI">
    <property type="taxonomic scope" value="Eukaryota"/>
</dbReference>
<dbReference type="HOGENOM" id="CLU_014546_2_2_1"/>
<dbReference type="InParanoid" id="Q7G4G7"/>
<dbReference type="OMA" id="GRWNTHT"/>
<dbReference type="OrthoDB" id="1483986at2759"/>
<dbReference type="Proteomes" id="UP000000763">
    <property type="component" value="Chromosome 10"/>
</dbReference>
<dbReference type="Proteomes" id="UP000059680">
    <property type="component" value="Chromosome 10"/>
</dbReference>
<dbReference type="GO" id="GO:0016747">
    <property type="term" value="F:acyltransferase activity, transferring groups other than amino-acyl groups"/>
    <property type="evidence" value="ECO:0000318"/>
    <property type="project" value="GO_Central"/>
</dbReference>
<dbReference type="GO" id="GO:0050734">
    <property type="term" value="F:hydroxycinnamoyltransferase activity"/>
    <property type="evidence" value="ECO:0007669"/>
    <property type="project" value="UniProtKB-ARBA"/>
</dbReference>
<dbReference type="GO" id="GO:0006952">
    <property type="term" value="P:defense response"/>
    <property type="evidence" value="ECO:0007669"/>
    <property type="project" value="UniProtKB-KW"/>
</dbReference>
<dbReference type="Gene3D" id="3.30.559.10">
    <property type="entry name" value="Chloramphenicol acetyltransferase-like domain"/>
    <property type="match status" value="2"/>
</dbReference>
<dbReference type="InterPro" id="IPR023213">
    <property type="entry name" value="CAT-like_dom_sf"/>
</dbReference>
<dbReference type="InterPro" id="IPR050898">
    <property type="entry name" value="Plant_acyltransferase"/>
</dbReference>
<dbReference type="PANTHER" id="PTHR31147">
    <property type="entry name" value="ACYL TRANSFERASE 4"/>
    <property type="match status" value="1"/>
</dbReference>
<dbReference type="PANTHER" id="PTHR31147:SF54">
    <property type="entry name" value="OS10G0105900 PROTEIN"/>
    <property type="match status" value="1"/>
</dbReference>
<dbReference type="Pfam" id="PF02458">
    <property type="entry name" value="Transferase"/>
    <property type="match status" value="1"/>
</dbReference>